<feature type="chain" id="PRO_0000183461" description="Cytochrome c oxidase subunit 1">
    <location>
        <begin position="1"/>
        <end position="551"/>
    </location>
</feature>
<feature type="transmembrane region" description="Helical" evidence="2">
    <location>
        <begin position="29"/>
        <end position="49"/>
    </location>
</feature>
<feature type="transmembrane region" description="Helical" evidence="2">
    <location>
        <begin position="79"/>
        <end position="99"/>
    </location>
</feature>
<feature type="transmembrane region" description="Helical" evidence="2">
    <location>
        <begin position="113"/>
        <end position="133"/>
    </location>
</feature>
<feature type="transmembrane region" description="Helical" evidence="2">
    <location>
        <begin position="156"/>
        <end position="176"/>
    </location>
</feature>
<feature type="transmembrane region" description="Helical" evidence="2">
    <location>
        <begin position="205"/>
        <end position="225"/>
    </location>
</feature>
<feature type="transmembrane region" description="Helical" evidence="2">
    <location>
        <begin position="245"/>
        <end position="265"/>
    </location>
</feature>
<feature type="transmembrane region" description="Helical" evidence="2">
    <location>
        <begin position="283"/>
        <end position="303"/>
    </location>
</feature>
<feature type="transmembrane region" description="Helical" evidence="2">
    <location>
        <begin position="313"/>
        <end position="333"/>
    </location>
</feature>
<feature type="transmembrane region" description="Helical" evidence="2">
    <location>
        <begin position="348"/>
        <end position="368"/>
    </location>
</feature>
<feature type="transmembrane region" description="Helical" evidence="2">
    <location>
        <begin position="382"/>
        <end position="402"/>
    </location>
</feature>
<feature type="transmembrane region" description="Helical" evidence="2">
    <location>
        <begin position="424"/>
        <end position="444"/>
    </location>
</feature>
<feature type="transmembrane region" description="Helical" evidence="2">
    <location>
        <begin position="466"/>
        <end position="486"/>
    </location>
</feature>
<feature type="binding site" description="axial binding residue" evidence="3">
    <location>
        <position position="76"/>
    </location>
    <ligand>
        <name>Fe(II)-heme a</name>
        <dbReference type="ChEBI" id="CHEBI:61715"/>
    </ligand>
    <ligandPart>
        <name>Fe</name>
        <dbReference type="ChEBI" id="CHEBI:18248"/>
    </ligandPart>
</feature>
<feature type="binding site" evidence="3">
    <location>
        <position position="251"/>
    </location>
    <ligand>
        <name>Cu cation</name>
        <dbReference type="ChEBI" id="CHEBI:23378"/>
        <label>B</label>
    </ligand>
</feature>
<feature type="binding site" evidence="3">
    <location>
        <position position="255"/>
    </location>
    <ligand>
        <name>Cu cation</name>
        <dbReference type="ChEBI" id="CHEBI:23378"/>
        <label>B</label>
    </ligand>
</feature>
<feature type="binding site" evidence="3">
    <location>
        <position position="300"/>
    </location>
    <ligand>
        <name>Cu cation</name>
        <dbReference type="ChEBI" id="CHEBI:23378"/>
        <label>B</label>
    </ligand>
</feature>
<feature type="binding site" evidence="3">
    <location>
        <position position="301"/>
    </location>
    <ligand>
        <name>Cu cation</name>
        <dbReference type="ChEBI" id="CHEBI:23378"/>
        <label>B</label>
    </ligand>
</feature>
<feature type="binding site" description="axial binding residue" evidence="3">
    <location>
        <position position="386"/>
    </location>
    <ligand>
        <name>heme a3</name>
        <dbReference type="ChEBI" id="CHEBI:83282"/>
    </ligand>
    <ligandPart>
        <name>Fe</name>
        <dbReference type="ChEBI" id="CHEBI:18248"/>
    </ligandPart>
</feature>
<feature type="binding site" description="axial binding residue" evidence="3">
    <location>
        <position position="388"/>
    </location>
    <ligand>
        <name>Fe(II)-heme a</name>
        <dbReference type="ChEBI" id="CHEBI:61715"/>
    </ligand>
    <ligandPart>
        <name>Fe</name>
        <dbReference type="ChEBI" id="CHEBI:18248"/>
    </ligandPart>
</feature>
<feature type="cross-link" description="1'-histidyl-3'-tyrosine (His-Tyr)" evidence="1">
    <location>
        <begin position="251"/>
        <end position="255"/>
    </location>
</feature>
<feature type="sequence conflict" description="In Ref. 1; CAA37777." evidence="3" ref="1">
    <original>SMPLFCW</original>
    <variation>VCPCFAG</variation>
    <location>
        <begin position="191"/>
        <end position="197"/>
    </location>
</feature>
<feature type="sequence conflict" description="In Ref. 1; CAA37777." evidence="3" ref="1">
    <original>V</original>
    <variation>L</variation>
    <location>
        <position position="212"/>
    </location>
</feature>
<feature type="sequence conflict" description="In Ref. 1; CAA37777." evidence="3" ref="1">
    <original>P</original>
    <variation>R</variation>
    <location>
        <position position="233"/>
    </location>
</feature>
<feature type="sequence conflict" description="In Ref. 1; CAA37777." evidence="3" ref="1">
    <original>S</original>
    <variation>H</variation>
    <location>
        <position position="305"/>
    </location>
</feature>
<feature type="sequence conflict" description="In Ref. 1; CAA37777." evidence="3" ref="1">
    <original>KIFSWCGT</original>
    <variation>QNFQLVRY</variation>
    <location>
        <begin position="329"/>
        <end position="336"/>
    </location>
</feature>
<feature type="sequence conflict" description="In Ref. 1; CAA37777." evidence="3" ref="1">
    <original>N</original>
    <variation>D</variation>
    <location>
        <position position="432"/>
    </location>
</feature>
<feature type="sequence conflict" description="In Ref. 1; CAA37777." evidence="3" ref="1">
    <original>VLWCGPYDFGIDTELMDDEETVQTLIADAAGS</original>
    <variation>CSGVVPTILVLTRS</variation>
    <location>
        <begin position="520"/>
        <end position="551"/>
    </location>
</feature>
<keyword id="KW-1003">Cell membrane</keyword>
<keyword id="KW-0186">Copper</keyword>
<keyword id="KW-0249">Electron transport</keyword>
<keyword id="KW-0349">Heme</keyword>
<keyword id="KW-0408">Iron</keyword>
<keyword id="KW-0472">Membrane</keyword>
<keyword id="KW-0479">Metal-binding</keyword>
<keyword id="KW-1185">Reference proteome</keyword>
<keyword id="KW-0679">Respiratory chain</keyword>
<keyword id="KW-1278">Translocase</keyword>
<keyword id="KW-0812">Transmembrane</keyword>
<keyword id="KW-1133">Transmembrane helix</keyword>
<keyword id="KW-0813">Transport</keyword>
<name>COX1_SYNY3</name>
<reference key="1">
    <citation type="journal article" date="1993" name="Biochem. Mol. Biol. Int.">
        <title>Characterization of a cta/CDE operon-like genomic region encoding subunits I-III of the cytochrome c oxidase of the cyanobacterium Synechocystis PCC 6803.</title>
        <authorList>
            <person name="Alge D."/>
            <person name="Peschek G.A."/>
        </authorList>
    </citation>
    <scope>NUCLEOTIDE SEQUENCE [GENOMIC DNA]</scope>
</reference>
<reference key="2">
    <citation type="journal article" date="1996" name="DNA Res.">
        <title>Sequence analysis of the genome of the unicellular cyanobacterium Synechocystis sp. strain PCC6803. II. Sequence determination of the entire genome and assignment of potential protein-coding regions.</title>
        <authorList>
            <person name="Kaneko T."/>
            <person name="Sato S."/>
            <person name="Kotani H."/>
            <person name="Tanaka A."/>
            <person name="Asamizu E."/>
            <person name="Nakamura Y."/>
            <person name="Miyajima N."/>
            <person name="Hirosawa M."/>
            <person name="Sugiura M."/>
            <person name="Sasamoto S."/>
            <person name="Kimura T."/>
            <person name="Hosouchi T."/>
            <person name="Matsuno A."/>
            <person name="Muraki A."/>
            <person name="Nakazaki N."/>
            <person name="Naruo K."/>
            <person name="Okumura S."/>
            <person name="Shimpo S."/>
            <person name="Takeuchi C."/>
            <person name="Wada T."/>
            <person name="Watanabe A."/>
            <person name="Yamada M."/>
            <person name="Yasuda M."/>
            <person name="Tabata S."/>
        </authorList>
    </citation>
    <scope>NUCLEOTIDE SEQUENCE [LARGE SCALE GENOMIC DNA]</scope>
    <source>
        <strain>ATCC 27184 / PCC 6803 / Kazusa</strain>
    </source>
</reference>
<gene>
    <name type="primary">ctaD</name>
    <name type="ordered locus">slr1137</name>
</gene>
<dbReference type="EC" id="7.1.1.9"/>
<dbReference type="EMBL" id="X53746">
    <property type="protein sequence ID" value="CAA37777.1"/>
    <property type="molecule type" value="Genomic_DNA"/>
</dbReference>
<dbReference type="EMBL" id="BA000022">
    <property type="protein sequence ID" value="BAA17289.1"/>
    <property type="molecule type" value="Genomic_DNA"/>
</dbReference>
<dbReference type="PIR" id="S77442">
    <property type="entry name" value="S77442"/>
</dbReference>
<dbReference type="SMR" id="Q06473"/>
<dbReference type="FunCoup" id="Q06473">
    <property type="interactions" value="131"/>
</dbReference>
<dbReference type="STRING" id="1148.gene:10498152"/>
<dbReference type="PaxDb" id="1148-1652367"/>
<dbReference type="EnsemblBacteria" id="BAA17289">
    <property type="protein sequence ID" value="BAA17289"/>
    <property type="gene ID" value="BAA17289"/>
</dbReference>
<dbReference type="KEGG" id="syn:slr1137"/>
<dbReference type="eggNOG" id="COG0843">
    <property type="taxonomic scope" value="Bacteria"/>
</dbReference>
<dbReference type="InParanoid" id="Q06473"/>
<dbReference type="PhylomeDB" id="Q06473"/>
<dbReference type="UniPathway" id="UPA00705"/>
<dbReference type="Proteomes" id="UP000001425">
    <property type="component" value="Chromosome"/>
</dbReference>
<dbReference type="GO" id="GO:0005886">
    <property type="term" value="C:plasma membrane"/>
    <property type="evidence" value="ECO:0007669"/>
    <property type="project" value="UniProtKB-SubCell"/>
</dbReference>
<dbReference type="GO" id="GO:0004129">
    <property type="term" value="F:cytochrome-c oxidase activity"/>
    <property type="evidence" value="ECO:0007669"/>
    <property type="project" value="UniProtKB-EC"/>
</dbReference>
<dbReference type="GO" id="GO:0020037">
    <property type="term" value="F:heme binding"/>
    <property type="evidence" value="ECO:0007669"/>
    <property type="project" value="InterPro"/>
</dbReference>
<dbReference type="GO" id="GO:0046872">
    <property type="term" value="F:metal ion binding"/>
    <property type="evidence" value="ECO:0007669"/>
    <property type="project" value="UniProtKB-KW"/>
</dbReference>
<dbReference type="GO" id="GO:0009060">
    <property type="term" value="P:aerobic respiration"/>
    <property type="evidence" value="ECO:0000318"/>
    <property type="project" value="GO_Central"/>
</dbReference>
<dbReference type="GO" id="GO:0015990">
    <property type="term" value="P:electron transport coupled proton transport"/>
    <property type="evidence" value="ECO:0007669"/>
    <property type="project" value="InterPro"/>
</dbReference>
<dbReference type="GO" id="GO:0006119">
    <property type="term" value="P:oxidative phosphorylation"/>
    <property type="evidence" value="ECO:0007669"/>
    <property type="project" value="UniProtKB-UniPathway"/>
</dbReference>
<dbReference type="GO" id="GO:0022904">
    <property type="term" value="P:respiratory electron transport chain"/>
    <property type="evidence" value="ECO:0000318"/>
    <property type="project" value="GO_Central"/>
</dbReference>
<dbReference type="FunFam" id="1.20.210.10:FF:000004">
    <property type="entry name" value="Cytochrome c oxidase subunit 1"/>
    <property type="match status" value="1"/>
</dbReference>
<dbReference type="Gene3D" id="1.20.210.10">
    <property type="entry name" value="Cytochrome c oxidase-like, subunit I domain"/>
    <property type="match status" value="1"/>
</dbReference>
<dbReference type="InterPro" id="IPR023616">
    <property type="entry name" value="Cyt_c_oxase-like_su1_dom"/>
</dbReference>
<dbReference type="InterPro" id="IPR036927">
    <property type="entry name" value="Cyt_c_oxase-like_su1_sf"/>
</dbReference>
<dbReference type="InterPro" id="IPR000883">
    <property type="entry name" value="Cyt_C_Oxase_1"/>
</dbReference>
<dbReference type="InterPro" id="IPR023615">
    <property type="entry name" value="Cyt_c_Oxase_su1_BS"/>
</dbReference>
<dbReference type="InterPro" id="IPR014241">
    <property type="entry name" value="Cyt_c_oxidase_su1_bac"/>
</dbReference>
<dbReference type="NCBIfam" id="TIGR02891">
    <property type="entry name" value="CtaD_CoxA"/>
    <property type="match status" value="1"/>
</dbReference>
<dbReference type="PANTHER" id="PTHR10422">
    <property type="entry name" value="CYTOCHROME C OXIDASE SUBUNIT 1"/>
    <property type="match status" value="1"/>
</dbReference>
<dbReference type="PANTHER" id="PTHR10422:SF18">
    <property type="entry name" value="CYTOCHROME C OXIDASE SUBUNIT 1"/>
    <property type="match status" value="1"/>
</dbReference>
<dbReference type="Pfam" id="PF00115">
    <property type="entry name" value="COX1"/>
    <property type="match status" value="1"/>
</dbReference>
<dbReference type="PRINTS" id="PR01165">
    <property type="entry name" value="CYCOXIDASEI"/>
</dbReference>
<dbReference type="SUPFAM" id="SSF81442">
    <property type="entry name" value="Cytochrome c oxidase subunit I-like"/>
    <property type="match status" value="1"/>
</dbReference>
<dbReference type="PROSITE" id="PS50855">
    <property type="entry name" value="COX1"/>
    <property type="match status" value="1"/>
</dbReference>
<dbReference type="PROSITE" id="PS00077">
    <property type="entry name" value="COX1_CUB"/>
    <property type="match status" value="1"/>
</dbReference>
<comment type="function">
    <text>Cytochrome c oxidase is the component of the respiratory chain that catalyzes the reduction of oxygen to water. Subunits 1-3 form the functional core of the enzyme complex. CO I is the catalytic subunit of the enzyme. Electrons originating in cytochrome c are transferred via the copper A center of subunit 2 and heme A of subunit 1 to the bimetallic center formed by heme A3 and copper B.</text>
</comment>
<comment type="catalytic activity">
    <reaction>
        <text>4 Fe(II)-[cytochrome c] + O2 + 8 H(+)(in) = 4 Fe(III)-[cytochrome c] + 2 H2O + 4 H(+)(out)</text>
        <dbReference type="Rhea" id="RHEA:11436"/>
        <dbReference type="Rhea" id="RHEA-COMP:10350"/>
        <dbReference type="Rhea" id="RHEA-COMP:14399"/>
        <dbReference type="ChEBI" id="CHEBI:15377"/>
        <dbReference type="ChEBI" id="CHEBI:15378"/>
        <dbReference type="ChEBI" id="CHEBI:15379"/>
        <dbReference type="ChEBI" id="CHEBI:29033"/>
        <dbReference type="ChEBI" id="CHEBI:29034"/>
        <dbReference type="EC" id="7.1.1.9"/>
    </reaction>
</comment>
<comment type="cofactor">
    <cofactor>
        <name>Cu(2+)</name>
        <dbReference type="ChEBI" id="CHEBI:29036"/>
    </cofactor>
    <text>Binds 1 copper B ion per subunit.</text>
</comment>
<comment type="cofactor">
    <cofactor>
        <name>heme</name>
        <dbReference type="ChEBI" id="CHEBI:30413"/>
    </cofactor>
    <text>Binds 2 heme groups per subunit.</text>
</comment>
<comment type="pathway">
    <text>Energy metabolism; oxidative phosphorylation.</text>
</comment>
<comment type="subcellular location">
    <subcellularLocation>
        <location>Cell membrane</location>
        <topology>Multi-pass membrane protein</topology>
    </subcellularLocation>
</comment>
<comment type="similarity">
    <text evidence="3">Belongs to the heme-copper respiratory oxidase family.</text>
</comment>
<protein>
    <recommendedName>
        <fullName>Cytochrome c oxidase subunit 1</fullName>
        <ecNumber>7.1.1.9</ecNumber>
    </recommendedName>
    <alternativeName>
        <fullName>Cytochrome aa3 subunit 1</fullName>
    </alternativeName>
    <alternativeName>
        <fullName>Cytochrome c oxidase polypeptide I</fullName>
    </alternativeName>
    <alternativeName>
        <fullName>Oxidase aa(3) subunit 1</fullName>
    </alternativeName>
</protein>
<accession>Q06473</accession>
<accession>P73261</accession>
<proteinExistence type="inferred from homology"/>
<organism>
    <name type="scientific">Synechocystis sp. (strain ATCC 27184 / PCC 6803 / Kazusa)</name>
    <dbReference type="NCBI Taxonomy" id="1111708"/>
    <lineage>
        <taxon>Bacteria</taxon>
        <taxon>Bacillati</taxon>
        <taxon>Cyanobacteriota</taxon>
        <taxon>Cyanophyceae</taxon>
        <taxon>Synechococcales</taxon>
        <taxon>Merismopediaceae</taxon>
        <taxon>Synechocystis</taxon>
    </lineage>
</organism>
<evidence type="ECO:0000250" key="1"/>
<evidence type="ECO:0000255" key="2"/>
<evidence type="ECO:0000305" key="3"/>
<sequence length="551" mass="61349">MTIAAENLTANHPRRKWTDYFTFCVDHKVIGIQYLVTSFLFFFIGGSFAEAMRTELATPSPDFVQPEMYNQLMTLHGTIMIFLWIVPAGAAFANYLIPLMVGTEDMAFPRLNAVAFWLTPPGGILLISSFFVGAPQAGWTSYPPLSLLSGKWGEELWILSLLLVGTSSILGAINFVTTILKMRIKDMDLHSMPLFCWAMLATSSLILLSTPVLASALILLSFDLIAGTSFFNPVGGGDPVVYQHLFWFYSHPAVYIMILPFFGVISEVIPVHARKPIFGYRAIAYSSLAISFLGLIVWAHHMFTSGTPGWLRMFFMATTMLIAVPTGIKIFSWCGTLWGGKIQLNSAMLFAFGFLSSFMIGGLTGVMVASVPFDIHVHDTYFVVGHFHYVLFGGSAFALFSGVYHWFPKMTGRMVNEPLGRLHFILTFIGMNLTFMPMHELGLMGMNRRIALYDVEFQPLNVLSTIGAYVLAASTIPFVINVFWSLFKGEKAARNPWRALTLEWQTASPPIIENFEEEPVLWCGPYDFGIDTELMDDEETVQTLIADAAGS</sequence>